<feature type="chain" id="PRO_0000432939" description="Gene product 19">
    <location>
        <begin position="1"/>
        <end position="107"/>
    </location>
</feature>
<feature type="sequence variant" description="In c2-Q3; confers partial resistance to bacterial AbiQ." evidence="1">
    <original>E</original>
    <variation>D</variation>
    <location>
        <position position="17"/>
    </location>
</feature>
<gene>
    <name evidence="3" type="primary">e19</name>
</gene>
<name>GP19_BPLC2</name>
<dbReference type="EMBL" id="L48605">
    <property type="protein sequence ID" value="AAA92161.1"/>
    <property type="molecule type" value="Genomic_DNA"/>
</dbReference>
<dbReference type="RefSeq" id="NP_043530.1">
    <property type="nucleotide sequence ID" value="NC_001706.1"/>
</dbReference>
<dbReference type="GeneID" id="1261171"/>
<dbReference type="KEGG" id="vg:1261171"/>
<dbReference type="Proteomes" id="UP000001835">
    <property type="component" value="Genome"/>
</dbReference>
<organismHost>
    <name type="scientific">Lactococcus</name>
    <name type="common">lactic streptococci</name>
    <dbReference type="NCBI Taxonomy" id="1357"/>
</organismHost>
<organism>
    <name type="scientific">Lactococcus phage c2</name>
    <dbReference type="NCBI Taxonomy" id="2681624"/>
    <lineage>
        <taxon>Viruses</taxon>
        <taxon>Duplodnaviria</taxon>
        <taxon>Heunggongvirae</taxon>
        <taxon>Uroviricota</taxon>
        <taxon>Caudoviricetes</taxon>
        <taxon>Ceduovirus</taxon>
        <taxon>Ceduovirus c2</taxon>
    </lineage>
</organism>
<sequence length="107" mass="12503">MINLQNKKLDIKEFLQELGFTVSLDYEREPMGVMFAEIHPIVSQVSNNSAIYQSFRTLEIELMVICTEETENSLYRAVQLLSDEHYIYANTITDNTNIIKLRGNYYD</sequence>
<comment type="function">
    <text evidence="5">Seems to be involved in escape from killing mediated by the bacterial type III toxin-antitoxin module AbiQ toxin protein upon infection of L.lactis subsp. lactis strain IL1403. A single variant independently isolated from 5 different phage confers on the virus the ability to partially escape killing (i.e. the virus grows in the bacteria).</text>
</comment>
<keyword id="KW-0244">Early protein</keyword>
<keyword id="KW-1185">Reference proteome</keyword>
<proteinExistence type="evidence at protein level"/>
<reference key="1">
    <citation type="journal article" date="1995" name="Appl. Environ. Microbiol.">
        <title>Sequencing and analysis of the prolate-headed lactococcal bacteriophage c2 genome and identification of the structural genes.</title>
        <authorList>
            <person name="Lubbers M.W."/>
            <person name="Waterfield N.R."/>
            <person name="Beresford T.P."/>
            <person name="Le Page R.W."/>
            <person name="Jarvis A.W."/>
        </authorList>
    </citation>
    <scope>NUCLEOTIDE SEQUENCE [GENOMIC DNA]</scope>
</reference>
<reference key="2">
    <citation type="journal article" date="1993" name="Can. J. Microbiol.">
        <title>Sequence analysis of the lysin gene region of the prolate lactococcal bacteriophage c2.</title>
        <authorList>
            <person name="Ward L.J."/>
            <person name="Beresford T.P."/>
            <person name="Lubbers M.W."/>
            <person name="Jarvis B.D."/>
            <person name="Jarvis A.W."/>
        </authorList>
    </citation>
    <scope>NUCLEOTIDE SEQUENCE [LARGE SCALE GENOMIC DNA]</scope>
</reference>
<reference key="3">
    <citation type="journal article" date="1994" name="Mol. Gen. Genet.">
        <title>Sequencing and analysis of the cos region of the lactococcal bacteriophage c2.</title>
        <authorList>
            <person name="Lubbers M.W."/>
            <person name="Ward L.J."/>
            <person name="Beresford T.P."/>
            <person name="Jarvis B.D."/>
            <person name="Jarvis A.W."/>
        </authorList>
    </citation>
    <scope>NUCLEOTIDE SEQUENCE [LARGE SCALE GENOMIC DNA]</scope>
</reference>
<reference key="4">
    <citation type="journal article" date="2013" name="J. Bacteriol.">
        <title>Effect of the abortive infection mechanism and type III toxin/antitoxin system AbiQ on the lytic cycle of Lactococcus lactis phages.</title>
        <authorList>
            <person name="Samson J.E."/>
            <person name="Belanger M."/>
            <person name="Moineau S."/>
        </authorList>
    </citation>
    <scope>FUNCTION</scope>
    <scope>VARIANT ASP-17</scope>
    <scope>CHARACTERIZATION OF VARIANT ASP-17</scope>
</reference>
<evidence type="ECO:0000269" key="1">
    <source>
    </source>
</evidence>
<evidence type="ECO:0000303" key="2">
    <source>
    </source>
</evidence>
<evidence type="ECO:0000303" key="3">
    <source>
    </source>
</evidence>
<evidence type="ECO:0000305" key="4"/>
<evidence type="ECO:0000305" key="5">
    <source>
    </source>
</evidence>
<accession>Q38278</accession>
<protein>
    <recommendedName>
        <fullName evidence="4">Gene product 19</fullName>
        <shortName>gp19</shortName>
    </recommendedName>
    <alternativeName>
        <fullName evidence="4">AbiQ resistance protein</fullName>
    </alternativeName>
    <alternativeName>
        <fullName evidence="2">E19</fullName>
    </alternativeName>
</protein>